<sequence length="478" mass="51749">MVTTTAKNVGYITQIIGPVVDAEFPEGDLPAIYNALLIEGKTDSGLDIRLTCEVQQLLGDKKVRAVSMSTTDGMVRGMKAIDTGAPITVPVGKSTLGRIFNVLGEPIDELGPVEIVDKFSIHRSAPKFTDLVTQPEIFETGIKVIDLLAPYRKGGKIGLFGGAGVGKTVLIQELIHNIAKEHSGVSVFGGVGERTREGNDLYNEFKESNVLGQVALVYGQMNEPPGARMRVGLTALTMAEYFRDVSKQDVLLFIDNIFRFVQAGSEVSALLGRMPSAVGYQPTLGTEMGDLQERITSTNEGSITSVQAVYVPADDLTDPAPATTFAHLDATTVLSRQLASLGIYPAVDPLSSTSTMLQPAVVGEEHYNIARGVQSTLQRYKDLQDIIAILGLDELSPEDKLVVNRARKLQRFLSQPFHVAEIFTGSPGKYVSLDKTIAGFKRVLQGEFDDLPEQAFYLVGDLDEALEKAKKLKDEGKS</sequence>
<evidence type="ECO:0000255" key="1">
    <source>
        <dbReference type="HAMAP-Rule" id="MF_01347"/>
    </source>
</evidence>
<reference key="1">
    <citation type="journal article" date="2003" name="DNA Res.">
        <title>Complete genome structure of Gloeobacter violaceus PCC 7421, a cyanobacterium that lacks thylakoids.</title>
        <authorList>
            <person name="Nakamura Y."/>
            <person name="Kaneko T."/>
            <person name="Sato S."/>
            <person name="Mimuro M."/>
            <person name="Miyashita H."/>
            <person name="Tsuchiya T."/>
            <person name="Sasamoto S."/>
            <person name="Watanabe A."/>
            <person name="Kawashima K."/>
            <person name="Kishida Y."/>
            <person name="Kiyokawa C."/>
            <person name="Kohara M."/>
            <person name="Matsumoto M."/>
            <person name="Matsuno A."/>
            <person name="Nakazaki N."/>
            <person name="Shimpo S."/>
            <person name="Takeuchi C."/>
            <person name="Yamada M."/>
            <person name="Tabata S."/>
        </authorList>
    </citation>
    <scope>NUCLEOTIDE SEQUENCE [LARGE SCALE GENOMIC DNA]</scope>
    <source>
        <strain>ATCC 29082 / PCC 7421</strain>
    </source>
</reference>
<dbReference type="EC" id="7.1.2.2" evidence="1"/>
<dbReference type="EMBL" id="BA000045">
    <property type="protein sequence ID" value="BAC90511.1"/>
    <property type="molecule type" value="Genomic_DNA"/>
</dbReference>
<dbReference type="RefSeq" id="NP_925516.1">
    <property type="nucleotide sequence ID" value="NC_005125.1"/>
</dbReference>
<dbReference type="RefSeq" id="WP_011142564.1">
    <property type="nucleotide sequence ID" value="NC_005125.1"/>
</dbReference>
<dbReference type="SMR" id="Q7NHG7"/>
<dbReference type="FunCoup" id="Q7NHG7">
    <property type="interactions" value="246"/>
</dbReference>
<dbReference type="STRING" id="251221.gene:10760070"/>
<dbReference type="EnsemblBacteria" id="BAC90511">
    <property type="protein sequence ID" value="BAC90511"/>
    <property type="gene ID" value="BAC90511"/>
</dbReference>
<dbReference type="KEGG" id="gvi:gll2570"/>
<dbReference type="PATRIC" id="fig|251221.4.peg.2608"/>
<dbReference type="eggNOG" id="COG0055">
    <property type="taxonomic scope" value="Bacteria"/>
</dbReference>
<dbReference type="HOGENOM" id="CLU_022398_0_2_3"/>
<dbReference type="InParanoid" id="Q7NHG7"/>
<dbReference type="OrthoDB" id="9801639at2"/>
<dbReference type="PhylomeDB" id="Q7NHG7"/>
<dbReference type="Proteomes" id="UP000000557">
    <property type="component" value="Chromosome"/>
</dbReference>
<dbReference type="GO" id="GO:0005886">
    <property type="term" value="C:plasma membrane"/>
    <property type="evidence" value="ECO:0007669"/>
    <property type="project" value="UniProtKB-SubCell"/>
</dbReference>
<dbReference type="GO" id="GO:0045259">
    <property type="term" value="C:proton-transporting ATP synthase complex"/>
    <property type="evidence" value="ECO:0007669"/>
    <property type="project" value="UniProtKB-KW"/>
</dbReference>
<dbReference type="GO" id="GO:0005524">
    <property type="term" value="F:ATP binding"/>
    <property type="evidence" value="ECO:0007669"/>
    <property type="project" value="UniProtKB-UniRule"/>
</dbReference>
<dbReference type="GO" id="GO:0016887">
    <property type="term" value="F:ATP hydrolysis activity"/>
    <property type="evidence" value="ECO:0007669"/>
    <property type="project" value="InterPro"/>
</dbReference>
<dbReference type="GO" id="GO:0046933">
    <property type="term" value="F:proton-transporting ATP synthase activity, rotational mechanism"/>
    <property type="evidence" value="ECO:0007669"/>
    <property type="project" value="UniProtKB-UniRule"/>
</dbReference>
<dbReference type="CDD" id="cd18110">
    <property type="entry name" value="ATP-synt_F1_beta_C"/>
    <property type="match status" value="1"/>
</dbReference>
<dbReference type="CDD" id="cd18115">
    <property type="entry name" value="ATP-synt_F1_beta_N"/>
    <property type="match status" value="1"/>
</dbReference>
<dbReference type="CDD" id="cd01133">
    <property type="entry name" value="F1-ATPase_beta_CD"/>
    <property type="match status" value="1"/>
</dbReference>
<dbReference type="FunFam" id="1.10.1140.10:FF:000001">
    <property type="entry name" value="ATP synthase subunit beta"/>
    <property type="match status" value="1"/>
</dbReference>
<dbReference type="FunFam" id="3.40.50.300:FF:000004">
    <property type="entry name" value="ATP synthase subunit beta"/>
    <property type="match status" value="1"/>
</dbReference>
<dbReference type="FunFam" id="2.40.10.170:FF:000002">
    <property type="entry name" value="ATP synthase subunit beta, chloroplastic"/>
    <property type="match status" value="1"/>
</dbReference>
<dbReference type="Gene3D" id="2.40.10.170">
    <property type="match status" value="1"/>
</dbReference>
<dbReference type="Gene3D" id="1.10.1140.10">
    <property type="entry name" value="Bovine Mitochondrial F1-atpase, Atp Synthase Beta Chain, Chain D, domain 3"/>
    <property type="match status" value="1"/>
</dbReference>
<dbReference type="Gene3D" id="3.40.50.300">
    <property type="entry name" value="P-loop containing nucleotide triphosphate hydrolases"/>
    <property type="match status" value="1"/>
</dbReference>
<dbReference type="HAMAP" id="MF_01347">
    <property type="entry name" value="ATP_synth_beta_bact"/>
    <property type="match status" value="1"/>
</dbReference>
<dbReference type="InterPro" id="IPR003593">
    <property type="entry name" value="AAA+_ATPase"/>
</dbReference>
<dbReference type="InterPro" id="IPR055190">
    <property type="entry name" value="ATP-synt_VA_C"/>
</dbReference>
<dbReference type="InterPro" id="IPR005722">
    <property type="entry name" value="ATP_synth_F1_bsu"/>
</dbReference>
<dbReference type="InterPro" id="IPR050053">
    <property type="entry name" value="ATPase_alpha/beta_chains"/>
</dbReference>
<dbReference type="InterPro" id="IPR004100">
    <property type="entry name" value="ATPase_F1/V1/A1_a/bsu_N"/>
</dbReference>
<dbReference type="InterPro" id="IPR036121">
    <property type="entry name" value="ATPase_F1/V1/A1_a/bsu_N_sf"/>
</dbReference>
<dbReference type="InterPro" id="IPR000194">
    <property type="entry name" value="ATPase_F1/V1/A1_a/bsu_nucl-bd"/>
</dbReference>
<dbReference type="InterPro" id="IPR024034">
    <property type="entry name" value="ATPase_F1/V1_b/a_C"/>
</dbReference>
<dbReference type="InterPro" id="IPR027417">
    <property type="entry name" value="P-loop_NTPase"/>
</dbReference>
<dbReference type="NCBIfam" id="TIGR01039">
    <property type="entry name" value="atpD"/>
    <property type="match status" value="1"/>
</dbReference>
<dbReference type="PANTHER" id="PTHR15184">
    <property type="entry name" value="ATP SYNTHASE"/>
    <property type="match status" value="1"/>
</dbReference>
<dbReference type="PANTHER" id="PTHR15184:SF71">
    <property type="entry name" value="ATP SYNTHASE SUBUNIT BETA, MITOCHONDRIAL"/>
    <property type="match status" value="1"/>
</dbReference>
<dbReference type="Pfam" id="PF00006">
    <property type="entry name" value="ATP-synt_ab"/>
    <property type="match status" value="1"/>
</dbReference>
<dbReference type="Pfam" id="PF02874">
    <property type="entry name" value="ATP-synt_ab_N"/>
    <property type="match status" value="1"/>
</dbReference>
<dbReference type="Pfam" id="PF22919">
    <property type="entry name" value="ATP-synt_VA_C"/>
    <property type="match status" value="1"/>
</dbReference>
<dbReference type="SMART" id="SM00382">
    <property type="entry name" value="AAA"/>
    <property type="match status" value="1"/>
</dbReference>
<dbReference type="SUPFAM" id="SSF47917">
    <property type="entry name" value="C-terminal domain of alpha and beta subunits of F1 ATP synthase"/>
    <property type="match status" value="1"/>
</dbReference>
<dbReference type="SUPFAM" id="SSF50615">
    <property type="entry name" value="N-terminal domain of alpha and beta subunits of F1 ATP synthase"/>
    <property type="match status" value="1"/>
</dbReference>
<dbReference type="SUPFAM" id="SSF52540">
    <property type="entry name" value="P-loop containing nucleoside triphosphate hydrolases"/>
    <property type="match status" value="1"/>
</dbReference>
<accession>Q7NHG7</accession>
<gene>
    <name evidence="1" type="primary">atpD</name>
    <name evidence="1" type="synonym">atpB</name>
    <name type="ordered locus">gll2570</name>
</gene>
<feature type="chain" id="PRO_0000254270" description="ATP synthase subunit beta">
    <location>
        <begin position="1"/>
        <end position="478"/>
    </location>
</feature>
<feature type="binding site" evidence="1">
    <location>
        <begin position="161"/>
        <end position="168"/>
    </location>
    <ligand>
        <name>ATP</name>
        <dbReference type="ChEBI" id="CHEBI:30616"/>
    </ligand>
</feature>
<organism>
    <name type="scientific">Gloeobacter violaceus (strain ATCC 29082 / PCC 7421)</name>
    <dbReference type="NCBI Taxonomy" id="251221"/>
    <lineage>
        <taxon>Bacteria</taxon>
        <taxon>Bacillati</taxon>
        <taxon>Cyanobacteriota</taxon>
        <taxon>Cyanophyceae</taxon>
        <taxon>Gloeobacterales</taxon>
        <taxon>Gloeobacteraceae</taxon>
        <taxon>Gloeobacter</taxon>
    </lineage>
</organism>
<comment type="function">
    <text evidence="1">Produces ATP from ADP in the presence of a proton gradient across the membrane. The catalytic sites are hosted primarily by the beta subunits.</text>
</comment>
<comment type="catalytic activity">
    <reaction evidence="1">
        <text>ATP + H2O + 4 H(+)(in) = ADP + phosphate + 5 H(+)(out)</text>
        <dbReference type="Rhea" id="RHEA:57720"/>
        <dbReference type="ChEBI" id="CHEBI:15377"/>
        <dbReference type="ChEBI" id="CHEBI:15378"/>
        <dbReference type="ChEBI" id="CHEBI:30616"/>
        <dbReference type="ChEBI" id="CHEBI:43474"/>
        <dbReference type="ChEBI" id="CHEBI:456216"/>
        <dbReference type="EC" id="7.1.2.2"/>
    </reaction>
</comment>
<comment type="subunit">
    <text evidence="1">F-type ATPases have 2 components, CF(1) - the catalytic core - and CF(0) - the membrane proton channel. CF(1) has five subunits: alpha(3), beta(3), gamma(1), delta(1), epsilon(1). CF(0) has four main subunits: a(1), b(1), b'(1) and c(9-12).</text>
</comment>
<comment type="subcellular location">
    <subcellularLocation>
        <location evidence="1">Cell inner membrane</location>
        <topology evidence="1">Peripheral membrane protein</topology>
    </subcellularLocation>
</comment>
<comment type="similarity">
    <text evidence="1">Belongs to the ATPase alpha/beta chains family.</text>
</comment>
<name>ATPB_GLOVI</name>
<proteinExistence type="inferred from homology"/>
<protein>
    <recommendedName>
        <fullName evidence="1">ATP synthase subunit beta</fullName>
        <ecNumber evidence="1">7.1.2.2</ecNumber>
    </recommendedName>
    <alternativeName>
        <fullName evidence="1">ATP synthase F1 sector subunit beta</fullName>
    </alternativeName>
    <alternativeName>
        <fullName evidence="1">F-ATPase subunit beta</fullName>
    </alternativeName>
</protein>
<keyword id="KW-0066">ATP synthesis</keyword>
<keyword id="KW-0067">ATP-binding</keyword>
<keyword id="KW-0997">Cell inner membrane</keyword>
<keyword id="KW-1003">Cell membrane</keyword>
<keyword id="KW-0139">CF(1)</keyword>
<keyword id="KW-0375">Hydrogen ion transport</keyword>
<keyword id="KW-0406">Ion transport</keyword>
<keyword id="KW-0472">Membrane</keyword>
<keyword id="KW-0547">Nucleotide-binding</keyword>
<keyword id="KW-1185">Reference proteome</keyword>
<keyword id="KW-1278">Translocase</keyword>
<keyword id="KW-0813">Transport</keyword>